<gene>
    <name evidence="10" type="primary">egg-3</name>
    <name evidence="10" type="ORF">F44F4.2</name>
</gene>
<feature type="chain" id="PRO_0000443421" description="Protein tyrosine phosphatase-like protein egg-3">
    <location>
        <begin position="1"/>
        <end position="555"/>
    </location>
</feature>
<feature type="domain" description="Tyrosine-protein phosphatase" evidence="1">
    <location>
        <begin position="207"/>
        <end position="514"/>
    </location>
</feature>
<feature type="short sequence motif" description="D-box 1" evidence="3">
    <location>
        <begin position="96"/>
        <end position="99"/>
    </location>
</feature>
<feature type="short sequence motif" description="D-box 2" evidence="3">
    <location>
        <begin position="130"/>
        <end position="133"/>
    </location>
</feature>
<feature type="short sequence motif" description="RXXL motif; required for cortical localization" evidence="3">
    <location>
        <begin position="253"/>
        <end position="256"/>
    </location>
</feature>
<feature type="short sequence motif" description="RXXL motif" evidence="7">
    <location>
        <begin position="266"/>
        <end position="269"/>
    </location>
</feature>
<feature type="short sequence motif" description="RXXL motif; required for cortical localization" evidence="3">
    <location>
        <begin position="509"/>
        <end position="512"/>
    </location>
</feature>
<feature type="short sequence motif" description="RXXL motif; required for cortical localization" evidence="3">
    <location>
        <begin position="525"/>
        <end position="528"/>
    </location>
</feature>
<feature type="mutagenesis site" description="No effect on the interaction with mbk-2; when associated with A-455 and A-460." evidence="5">
    <original>C</original>
    <variation>A</variation>
    <location>
        <position position="452"/>
    </location>
</feature>
<feature type="mutagenesis site" description="No effect on the interaction with mbk-2; when associated with A-452 and A-460." evidence="5">
    <original>G</original>
    <variation>A</variation>
    <location>
        <position position="455"/>
    </location>
</feature>
<feature type="mutagenesis site" description="No effect on the interaction with mbk-2; when associated with A-452 and A-455." evidence="5">
    <original>G</original>
    <variation>A</variation>
    <location>
        <position position="460"/>
    </location>
</feature>
<sequence length="555" mass="64151">MRTSDSHLPLSNLARSDSIEFKDAVINEKWVHSANRRKGHLTPKAPEKKSGWFGGQKSEEELLMERVEQHELEELQTFIAQKLFRVDGIICDEETRILLVEKLMNAKEYPTINHDELAHRYGSSMAGWLRDRLVPSMSDCSSVLQRAAAEFYQNKMSDPLCNWGQLNPEHVSMVAARIAKFSEEMSSKVKWSLLVEPGKFSCHLTEFVQEFNRLDRMFVSNELSDEESLQTAFNANYLTKARSKMVPCAEFSRVKLNDGLGRLDDRNELRNGMFSDEHEFLQEEGYTAKSTYGTTDFIHANYVKGGPLLNTFICAQAPLKNTQEDFWRMVFQEKCQFIVMLNSAVDSSTLGPLDSANRNHCPYYWPRAENESLRFGSFHITCMKVDSKADPLFTITKLKVQKVGGNLLDAEFDEELFLEHWQWDWQYLGDVHWPFRVLRKARQLSTPTIVQCIDGCSKSGTLVSIETALMHFIRGSPITKSLILQSCVFVRLQRRLSVSSVLLYLFIYRVILRWIEPYVNKWYHRAALGLRFKSIGFIQKYNAMIQEFSRITPAY</sequence>
<protein>
    <recommendedName>
        <fullName evidence="8">Protein tyrosine phosphatase-like protein egg-3</fullName>
    </recommendedName>
    <alternativeName>
        <fullName evidence="10">Egg sterile protein 3</fullName>
    </alternativeName>
</protein>
<dbReference type="EMBL" id="BX284602">
    <property type="protein sequence ID" value="CAA85453.1"/>
    <property type="molecule type" value="Genomic_DNA"/>
</dbReference>
<dbReference type="PIR" id="T22184">
    <property type="entry name" value="T22184"/>
</dbReference>
<dbReference type="RefSeq" id="NP_001369855.1">
    <property type="nucleotide sequence ID" value="NM_001383944.2"/>
</dbReference>
<dbReference type="RefSeq" id="NP_496341.1">
    <property type="nucleotide sequence ID" value="NM_063940.4"/>
</dbReference>
<dbReference type="SMR" id="Q20402"/>
<dbReference type="ComplexPortal" id="CPX-3381">
    <property type="entry name" value="Egg-3/4/5 MBK-2 complex"/>
</dbReference>
<dbReference type="FunCoup" id="Q20402">
    <property type="interactions" value="173"/>
</dbReference>
<dbReference type="IntAct" id="Q20402">
    <property type="interactions" value="2"/>
</dbReference>
<dbReference type="STRING" id="6239.F44F4.2.2"/>
<dbReference type="PaxDb" id="6239-F44F4.2.1"/>
<dbReference type="PeptideAtlas" id="Q20402"/>
<dbReference type="EnsemblMetazoa" id="F44F4.2.1">
    <property type="protein sequence ID" value="F44F4.2.1"/>
    <property type="gene ID" value="WBGene00009701"/>
</dbReference>
<dbReference type="GeneID" id="174677"/>
<dbReference type="UCSC" id="F44F4.2.1">
    <property type="organism name" value="c. elegans"/>
</dbReference>
<dbReference type="AGR" id="WB:WBGene00009701"/>
<dbReference type="WormBase" id="F44F4.2">
    <property type="protein sequence ID" value="CE00998"/>
    <property type="gene ID" value="WBGene00009701"/>
    <property type="gene designation" value="egg-3"/>
</dbReference>
<dbReference type="eggNOG" id="KOG0106">
    <property type="taxonomic scope" value="Eukaryota"/>
</dbReference>
<dbReference type="eggNOG" id="KOG0789">
    <property type="taxonomic scope" value="Eukaryota"/>
</dbReference>
<dbReference type="GeneTree" id="ENSGT00940000171629"/>
<dbReference type="HOGENOM" id="CLU_039673_1_0_1"/>
<dbReference type="InParanoid" id="Q20402"/>
<dbReference type="OMA" id="WQERSKY"/>
<dbReference type="OrthoDB" id="5834449at2759"/>
<dbReference type="PhylomeDB" id="Q20402"/>
<dbReference type="PRO" id="PR:Q20402"/>
<dbReference type="Proteomes" id="UP000001940">
    <property type="component" value="Chromosome II"/>
</dbReference>
<dbReference type="Bgee" id="WBGene00009701">
    <property type="expression patterns" value="Expressed in germ line (C elegans) and 4 other cell types or tissues"/>
</dbReference>
<dbReference type="GO" id="GO:0005938">
    <property type="term" value="C:cell cortex"/>
    <property type="evidence" value="ECO:0000314"/>
    <property type="project" value="UniProtKB"/>
</dbReference>
<dbReference type="GO" id="GO:0019901">
    <property type="term" value="F:protein kinase binding"/>
    <property type="evidence" value="ECO:0000353"/>
    <property type="project" value="UniProtKB"/>
</dbReference>
<dbReference type="GO" id="GO:0004725">
    <property type="term" value="F:protein tyrosine phosphatase activity"/>
    <property type="evidence" value="ECO:0007669"/>
    <property type="project" value="InterPro"/>
</dbReference>
<dbReference type="GO" id="GO:0030866">
    <property type="term" value="P:cortical actin cytoskeleton organization"/>
    <property type="evidence" value="ECO:0000315"/>
    <property type="project" value="UniProtKB"/>
</dbReference>
<dbReference type="GO" id="GO:0030703">
    <property type="term" value="P:eggshell formation"/>
    <property type="evidence" value="ECO:0000315"/>
    <property type="project" value="UniProtKB"/>
</dbReference>
<dbReference type="GO" id="GO:0001556">
    <property type="term" value="P:oocyte maturation"/>
    <property type="evidence" value="ECO:0000303"/>
    <property type="project" value="ComplexPortal"/>
</dbReference>
<dbReference type="GO" id="GO:0040038">
    <property type="term" value="P:polar body extrusion after meiotic divisions"/>
    <property type="evidence" value="ECO:0000315"/>
    <property type="project" value="UniProtKB"/>
</dbReference>
<dbReference type="GO" id="GO:1904778">
    <property type="term" value="P:positive regulation of protein localization to cell cortex"/>
    <property type="evidence" value="ECO:0000315"/>
    <property type="project" value="UniProtKB"/>
</dbReference>
<dbReference type="CDD" id="cd00047">
    <property type="entry name" value="PTPc"/>
    <property type="match status" value="1"/>
</dbReference>
<dbReference type="Gene3D" id="3.90.190.10">
    <property type="entry name" value="Protein tyrosine phosphatase superfamily"/>
    <property type="match status" value="1"/>
</dbReference>
<dbReference type="InterPro" id="IPR052782">
    <property type="entry name" value="Oocyte-zygote_transition_reg"/>
</dbReference>
<dbReference type="InterPro" id="IPR029021">
    <property type="entry name" value="Prot-tyrosine_phosphatase-like"/>
</dbReference>
<dbReference type="InterPro" id="IPR000242">
    <property type="entry name" value="PTP_cat"/>
</dbReference>
<dbReference type="InterPro" id="IPR003595">
    <property type="entry name" value="Tyr_Pase_cat"/>
</dbReference>
<dbReference type="PANTHER" id="PTHR46163:SF7">
    <property type="entry name" value="PROTEIN TYROSINE PHOSPHATASE-LIKE PROTEIN EGG-3"/>
    <property type="match status" value="1"/>
</dbReference>
<dbReference type="PANTHER" id="PTHR46163">
    <property type="entry name" value="TYROSINE-PROTEIN PHOSPHATASE-RELATED"/>
    <property type="match status" value="1"/>
</dbReference>
<dbReference type="Pfam" id="PF00102">
    <property type="entry name" value="Y_phosphatase"/>
    <property type="match status" value="1"/>
</dbReference>
<dbReference type="PRINTS" id="PR00700">
    <property type="entry name" value="PRTYPHPHTASE"/>
</dbReference>
<dbReference type="SMART" id="SM00194">
    <property type="entry name" value="PTPc"/>
    <property type="match status" value="1"/>
</dbReference>
<dbReference type="SMART" id="SM00404">
    <property type="entry name" value="PTPc_motif"/>
    <property type="match status" value="1"/>
</dbReference>
<dbReference type="SUPFAM" id="SSF52799">
    <property type="entry name" value="(Phosphotyrosine protein) phosphatases II"/>
    <property type="match status" value="1"/>
</dbReference>
<dbReference type="PROSITE" id="PS50055">
    <property type="entry name" value="TYR_PHOSPHATASE_PTP"/>
    <property type="match status" value="1"/>
</dbReference>
<accession>Q20402</accession>
<reference evidence="9" key="1">
    <citation type="journal article" date="1998" name="Science">
        <title>Genome sequence of the nematode C. elegans: a platform for investigating biology.</title>
        <authorList>
            <consortium name="The C. elegans sequencing consortium"/>
        </authorList>
    </citation>
    <scope>NUCLEOTIDE SEQUENCE [LARGE SCALE GENOMIC DNA]</scope>
    <source>
        <strain evidence="9">Bristol N2</strain>
    </source>
</reference>
<reference evidence="8" key="2">
    <citation type="journal article" date="2007" name="Curr. Biol.">
        <title>Regulation of MBK-2/Dyrk kinase by dynamic cortical anchoring during the oocyte-to-zygote transition.</title>
        <authorList>
            <person name="Stitzel M.L."/>
            <person name="Cheng K.C."/>
            <person name="Seydoux G."/>
        </authorList>
    </citation>
    <scope>FUNCTION</scope>
    <scope>INTERACTION WITH MBK-2</scope>
    <scope>SUBCELLULAR LOCATION</scope>
    <scope>DEVELOPMENTAL STAGE</scope>
    <scope>MOTIF</scope>
    <scope>DISRUPTION PHENOTYPE</scope>
</reference>
<reference evidence="8" key="3">
    <citation type="journal article" date="2007" name="Curr. Biol.">
        <title>EGG-3 regulates cell-surface and cortex rearrangements during egg activation in Caenorhabditis elegans.</title>
        <authorList>
            <person name="Maruyama R."/>
            <person name="Velarde N.V."/>
            <person name="Klancer R."/>
            <person name="Gordon S."/>
            <person name="Kadandale P."/>
            <person name="Parry J.M."/>
            <person name="Hang J.S."/>
            <person name="Rubin J."/>
            <person name="Stewart-Michaelis A."/>
            <person name="Schweinsberg P."/>
            <person name="Grant B.D."/>
            <person name="Piano F."/>
            <person name="Sugimoto A."/>
            <person name="Singson A."/>
        </authorList>
    </citation>
    <scope>FUNCTION</scope>
    <scope>SUBCELLULAR LOCATION</scope>
    <scope>DISRUPTION PHENOTYPE</scope>
</reference>
<reference evidence="8" key="4">
    <citation type="journal article" date="2009" name="Cell">
        <title>Regulation of MBK-2/DYRK by CDK-1 and the pseudophosphatases EGG-4 and EGG-5 during the oocyte-to-embryo transition.</title>
        <authorList>
            <person name="Cheng K.C."/>
            <person name="Klancer R."/>
            <person name="Singson A."/>
            <person name="Seydoux G."/>
        </authorList>
    </citation>
    <scope>FUNCTION</scope>
    <scope>IDENTIFICATION IN A COMPLEX WITH MBK-2; EGG-4 AND EGG-5</scope>
    <scope>INTERACTION WITH MBK-2</scope>
    <scope>SUBCELLULAR LOCATION</scope>
    <scope>DEVELOPMENTAL STAGE</scope>
    <scope>DISRUPTION PHENOTYPE</scope>
    <scope>MUTAGENESIS OF CYS-452; GLY-455 AND GLY-460</scope>
</reference>
<reference evidence="8" key="5">
    <citation type="journal article" date="2009" name="Curr. Biol.">
        <title>EGG-4 and EGG-5 Link Events of the Oocyte-to-Embryo Transition with Meiotic Progression in C. elegans.</title>
        <authorList>
            <person name="Parry J.M."/>
            <person name="Velarde N.V."/>
            <person name="Lefkovith A.J."/>
            <person name="Zegarek M.H."/>
            <person name="Hang J.S."/>
            <person name="Ohm J."/>
            <person name="Klancer R."/>
            <person name="Maruyama R."/>
            <person name="Druzhinina M.K."/>
            <person name="Grant B.D."/>
            <person name="Piano F."/>
            <person name="Singson A."/>
        </authorList>
    </citation>
    <scope>FUNCTION</scope>
    <scope>INTERACTION WITH MBK-2 AND EGG-4</scope>
    <scope>SUBCELLULAR LOCATION</scope>
    <scope>DISRUPTION PHENOTYPE</scope>
</reference>
<reference evidence="8" key="6">
    <citation type="journal article" date="2010" name="Curr. Biol.">
        <title>Eggshell chitin and chitin-interacting proteins prevent polyspermy in C. elegans.</title>
        <authorList>
            <person name="Johnston W.L."/>
            <person name="Krizus A."/>
            <person name="Dennis J.W."/>
        </authorList>
    </citation>
    <scope>SUBCELLULAR LOCATION</scope>
    <scope>DISRUPTION PHENOTYPE</scope>
</reference>
<proteinExistence type="evidence at protein level"/>
<keyword id="KW-0963">Cytoplasm</keyword>
<keyword id="KW-0217">Developmental protein</keyword>
<keyword id="KW-1185">Reference proteome</keyword>
<keyword id="KW-0677">Repeat</keyword>
<evidence type="ECO:0000255" key="1">
    <source>
        <dbReference type="PROSITE-ProRule" id="PRU00160"/>
    </source>
</evidence>
<evidence type="ECO:0000269" key="2">
    <source>
    </source>
</evidence>
<evidence type="ECO:0000269" key="3">
    <source>
    </source>
</evidence>
<evidence type="ECO:0000269" key="4">
    <source>
    </source>
</evidence>
<evidence type="ECO:0000269" key="5">
    <source>
    </source>
</evidence>
<evidence type="ECO:0000269" key="6">
    <source>
    </source>
</evidence>
<evidence type="ECO:0000303" key="7">
    <source>
    </source>
</evidence>
<evidence type="ECO:0000305" key="8"/>
<evidence type="ECO:0000312" key="9">
    <source>
        <dbReference type="Proteomes" id="UP000001940"/>
    </source>
</evidence>
<evidence type="ECO:0000312" key="10">
    <source>
        <dbReference type="WormBase" id="F44F4.2"/>
    </source>
</evidence>
<organism evidence="9">
    <name type="scientific">Caenorhabditis elegans</name>
    <dbReference type="NCBI Taxonomy" id="6239"/>
    <lineage>
        <taxon>Eukaryota</taxon>
        <taxon>Metazoa</taxon>
        <taxon>Ecdysozoa</taxon>
        <taxon>Nematoda</taxon>
        <taxon>Chromadorea</taxon>
        <taxon>Rhabditida</taxon>
        <taxon>Rhabditina</taxon>
        <taxon>Rhabditomorpha</taxon>
        <taxon>Rhabditoidea</taxon>
        <taxon>Rhabditidae</taxon>
        <taxon>Peloderinae</taxon>
        <taxon>Caenorhabditis</taxon>
    </lineage>
</organism>
<comment type="function">
    <text evidence="2 3 5">Probable pseudophosphatase required for the oocyte-to-zygote transition during which it regulates the polarized dispersal of the cortical actin cytoskeleton, the synthesis of the eggshell chitin layer and the formation of the polar bodies after meiosis I and II (PubMed:17869112). Acts as a scaffold to tether kinase mbk-2 and pseudophosphatases egg-4 and egg-5 to the oocyte cortex and thus restricts mbk-2 activity to the cortex during meiosis I (PubMed:17869112, PubMed:17869113, PubMed:19879147, PubMed:19879842). Regulates mbk-2 localization to cytoplasmic foci during meiosis II (PubMed:17869112, PubMed:17869113). Also required for chitin synthase chs-1 localization to the cell cortex of unfertilized oocytes and to cytoplasmic foci in the fertilized embryo (PubMed:17869112).</text>
</comment>
<comment type="subunit">
    <text evidence="3 4 5">Part of a complex, consisting of pseudophosphatases egg-3, egg-4, egg-5 and kinase mbk-2; this complex is required for the oocyte-to-zygote transition (PubMed:19879147, PubMed:19879842). Interacts (via tyrosine-protein phosphatase domain) with kinase mbk-2 (via N-terminus); the interaction does not affect mbk-2 kinase activity, is enhanced by mbk-2 tyrosine phosphorylation status and requires prior binding of mbk-2 to egg-4 and egg-5 (PubMed:17869113, PubMed:19879147, PubMed:19879842). Interacts with egg-4 (PubMed:19879147).</text>
</comment>
<comment type="interaction">
    <interactant intactId="EBI-2476895">
        <id>Q20402</id>
    </interactant>
    <interactant intactId="EBI-2005616">
        <id>Q9XTF3</id>
        <label>mbk-2</label>
    </interactant>
    <organismsDiffer>false</organismsDiffer>
    <experiments>9</experiments>
</comment>
<comment type="subcellular location">
    <subcellularLocation>
        <location evidence="2 3 4 5 6">Cytoplasm</location>
        <location evidence="2 3 4 5 6">Cell cortex</location>
    </subcellularLocation>
    <subcellularLocation>
        <location evidence="2 3 4 5 6">Cytoplasm</location>
    </subcellularLocation>
    <text evidence="2 3 4 5 6">Co-localizes with mbk-2 to the oocyte cell membrane during most of meiosis I, relocalizes to subcortical foci during anaphase I which become cytoplasmic during meiosis II (PubMed:17869112, PubMed:17869113, PubMed:19879842). At the end of meiosis II, egg-3 is degraded releasing mbk-2 in the cytoplasm (PubMed:17869112, PubMed:17869113, PubMed:19879842). Co-localizes with egg-4 to the cell cortex in developing oocytes and in newly fertilized embryos (PubMed:19879147). Cortical localization in developing oocytes is egg-1, egg-2 and chs-1-dependent (PubMed:17869112, PubMed:20971008). Co-localizes in the fertilized egg with chs-1 to cytoplasmic foci (PubMed:17869112).</text>
</comment>
<comment type="developmental stage">
    <text evidence="3 5">Expressed in oocytes during meiosis I and II followed by proteasomal degradation at the 1-cell and 2-cell embryonic stages (at protein level).</text>
</comment>
<comment type="domain">
    <text evidence="3">The N-terminal destruction box (D-box) motifs 1 and 2 act as a recognition signal for degradation via the ubiquitin-proteasome pathway.</text>
</comment>
<comment type="disruption phenotype">
    <text evidence="2 3 4 5 6">RNAi-mediated knockdown causes hermaphrodite sterility characterized by the production of oocytes lacking an eggshell (PubMed:17869112). Prevents the polarized dispersal of cortical F-actin following oocyte fertilization without affecting the formation of the F-actin cap (PubMed:17869112). Impairs egg-4 and egg-5 cortical localization in oocytes (PubMed:19879147). Causes a loss of kinase mbk-2 cortical localization in oocyte in meiosis I (PubMed:17869113, PubMed:19879147, PubMed:19879842). RNAi-mediated knockdown in a mat-1 (ax227) mutant background, restores mbk-2 cytoplasmic relocalization and mbk-2-mediated degradation of pos-1 and mei-1 (PubMed:17869113). Simultaneous RNAi-mediated knockdown of mat-1 causes polyspermy and a failure to internalize egg-1 after oocyte fertilization (PubMed:20971008).</text>
</comment>
<comment type="similarity">
    <text evidence="8">Belongs to the protein-tyrosine phosphatase family.</text>
</comment>
<comment type="caution">
    <text evidence="8">Although the active site Cys-452 is conserved, another important catalytic site, 'Arg-458', is replaced by a Lys residue suggesting that egg-3 may lack catalytic activity. Despite the lack of catalytic activity, egg-3 may retain the capacity to bind to phosphorylated substrates.</text>
</comment>
<name>EGG3_CAEEL</name>